<gene>
    <name evidence="1" type="primary">rplF</name>
    <name type="ordered locus">Patl_1004</name>
</gene>
<reference key="1">
    <citation type="submission" date="2006-06" db="EMBL/GenBank/DDBJ databases">
        <title>Complete sequence of Pseudoalteromonas atlantica T6c.</title>
        <authorList>
            <consortium name="US DOE Joint Genome Institute"/>
            <person name="Copeland A."/>
            <person name="Lucas S."/>
            <person name="Lapidus A."/>
            <person name="Barry K."/>
            <person name="Detter J.C."/>
            <person name="Glavina del Rio T."/>
            <person name="Hammon N."/>
            <person name="Israni S."/>
            <person name="Dalin E."/>
            <person name="Tice H."/>
            <person name="Pitluck S."/>
            <person name="Saunders E."/>
            <person name="Brettin T."/>
            <person name="Bruce D."/>
            <person name="Han C."/>
            <person name="Tapia R."/>
            <person name="Gilna P."/>
            <person name="Schmutz J."/>
            <person name="Larimer F."/>
            <person name="Land M."/>
            <person name="Hauser L."/>
            <person name="Kyrpides N."/>
            <person name="Kim E."/>
            <person name="Karls A.C."/>
            <person name="Bartlett D."/>
            <person name="Higgins B.P."/>
            <person name="Richardson P."/>
        </authorList>
    </citation>
    <scope>NUCLEOTIDE SEQUENCE [LARGE SCALE GENOMIC DNA]</scope>
    <source>
        <strain>T6c / ATCC BAA-1087</strain>
    </source>
</reference>
<comment type="function">
    <text evidence="1">This protein binds to the 23S rRNA, and is important in its secondary structure. It is located near the subunit interface in the base of the L7/L12 stalk, and near the tRNA binding site of the peptidyltransferase center.</text>
</comment>
<comment type="subunit">
    <text evidence="1">Part of the 50S ribosomal subunit.</text>
</comment>
<comment type="similarity">
    <text evidence="1">Belongs to the universal ribosomal protein uL6 family.</text>
</comment>
<protein>
    <recommendedName>
        <fullName evidence="1">Large ribosomal subunit protein uL6</fullName>
    </recommendedName>
    <alternativeName>
        <fullName evidence="2">50S ribosomal protein L6</fullName>
    </alternativeName>
</protein>
<keyword id="KW-0687">Ribonucleoprotein</keyword>
<keyword id="KW-0689">Ribosomal protein</keyword>
<keyword id="KW-0694">RNA-binding</keyword>
<keyword id="KW-0699">rRNA-binding</keyword>
<name>RL6_PSEA6</name>
<evidence type="ECO:0000255" key="1">
    <source>
        <dbReference type="HAMAP-Rule" id="MF_01365"/>
    </source>
</evidence>
<evidence type="ECO:0000305" key="2"/>
<sequence length="177" mass="18975">MSRIAKAPVDVLSGVEVTIAGQEVTVKGKNGTLSRVFNDAVEVVQEENQLKASPREGVANGWAQAGTARSLLDAMVIGVSQGFEKKLQLNGVGYRAAAQGKKLNLTLGFSHPVAYEMPEGISVETPSQTEIVVKGADKQLVGQVAANIRGYRPPEPYKGKGVRYADEVVRRKEAKKK</sequence>
<dbReference type="EMBL" id="CP000388">
    <property type="protein sequence ID" value="ABG39530.1"/>
    <property type="molecule type" value="Genomic_DNA"/>
</dbReference>
<dbReference type="RefSeq" id="WP_006990567.1">
    <property type="nucleotide sequence ID" value="NC_008228.1"/>
</dbReference>
<dbReference type="SMR" id="Q15X58"/>
<dbReference type="STRING" id="342610.Patl_1004"/>
<dbReference type="KEGG" id="pat:Patl_1004"/>
<dbReference type="eggNOG" id="COG0097">
    <property type="taxonomic scope" value="Bacteria"/>
</dbReference>
<dbReference type="HOGENOM" id="CLU_065464_1_2_6"/>
<dbReference type="OrthoDB" id="9805007at2"/>
<dbReference type="Proteomes" id="UP000001981">
    <property type="component" value="Chromosome"/>
</dbReference>
<dbReference type="GO" id="GO:0022625">
    <property type="term" value="C:cytosolic large ribosomal subunit"/>
    <property type="evidence" value="ECO:0007669"/>
    <property type="project" value="TreeGrafter"/>
</dbReference>
<dbReference type="GO" id="GO:0019843">
    <property type="term" value="F:rRNA binding"/>
    <property type="evidence" value="ECO:0007669"/>
    <property type="project" value="UniProtKB-UniRule"/>
</dbReference>
<dbReference type="GO" id="GO:0003735">
    <property type="term" value="F:structural constituent of ribosome"/>
    <property type="evidence" value="ECO:0007669"/>
    <property type="project" value="InterPro"/>
</dbReference>
<dbReference type="GO" id="GO:0002181">
    <property type="term" value="P:cytoplasmic translation"/>
    <property type="evidence" value="ECO:0007669"/>
    <property type="project" value="TreeGrafter"/>
</dbReference>
<dbReference type="FunFam" id="3.90.930.12:FF:000001">
    <property type="entry name" value="50S ribosomal protein L6"/>
    <property type="match status" value="1"/>
</dbReference>
<dbReference type="FunFam" id="3.90.930.12:FF:000002">
    <property type="entry name" value="50S ribosomal protein L6"/>
    <property type="match status" value="1"/>
</dbReference>
<dbReference type="Gene3D" id="3.90.930.12">
    <property type="entry name" value="Ribosomal protein L6, alpha-beta domain"/>
    <property type="match status" value="2"/>
</dbReference>
<dbReference type="HAMAP" id="MF_01365_B">
    <property type="entry name" value="Ribosomal_uL6_B"/>
    <property type="match status" value="1"/>
</dbReference>
<dbReference type="InterPro" id="IPR000702">
    <property type="entry name" value="Ribosomal_uL6-like"/>
</dbReference>
<dbReference type="InterPro" id="IPR036789">
    <property type="entry name" value="Ribosomal_uL6-like_a/b-dom_sf"/>
</dbReference>
<dbReference type="InterPro" id="IPR020040">
    <property type="entry name" value="Ribosomal_uL6_a/b-dom"/>
</dbReference>
<dbReference type="InterPro" id="IPR019906">
    <property type="entry name" value="Ribosomal_uL6_bac-type"/>
</dbReference>
<dbReference type="InterPro" id="IPR002358">
    <property type="entry name" value="Ribosomal_uL6_CS"/>
</dbReference>
<dbReference type="NCBIfam" id="TIGR03654">
    <property type="entry name" value="L6_bact"/>
    <property type="match status" value="1"/>
</dbReference>
<dbReference type="PANTHER" id="PTHR11655">
    <property type="entry name" value="60S/50S RIBOSOMAL PROTEIN L6/L9"/>
    <property type="match status" value="1"/>
</dbReference>
<dbReference type="PANTHER" id="PTHR11655:SF14">
    <property type="entry name" value="LARGE RIBOSOMAL SUBUNIT PROTEIN UL6M"/>
    <property type="match status" value="1"/>
</dbReference>
<dbReference type="Pfam" id="PF00347">
    <property type="entry name" value="Ribosomal_L6"/>
    <property type="match status" value="2"/>
</dbReference>
<dbReference type="PIRSF" id="PIRSF002162">
    <property type="entry name" value="Ribosomal_L6"/>
    <property type="match status" value="1"/>
</dbReference>
<dbReference type="PRINTS" id="PR00059">
    <property type="entry name" value="RIBOSOMALL6"/>
</dbReference>
<dbReference type="SUPFAM" id="SSF56053">
    <property type="entry name" value="Ribosomal protein L6"/>
    <property type="match status" value="2"/>
</dbReference>
<dbReference type="PROSITE" id="PS00525">
    <property type="entry name" value="RIBOSOMAL_L6_1"/>
    <property type="match status" value="1"/>
</dbReference>
<feature type="chain" id="PRO_0000260917" description="Large ribosomal subunit protein uL6">
    <location>
        <begin position="1"/>
        <end position="177"/>
    </location>
</feature>
<accession>Q15X58</accession>
<organism>
    <name type="scientific">Pseudoalteromonas atlantica (strain T6c / ATCC BAA-1087)</name>
    <dbReference type="NCBI Taxonomy" id="3042615"/>
    <lineage>
        <taxon>Bacteria</taxon>
        <taxon>Pseudomonadati</taxon>
        <taxon>Pseudomonadota</taxon>
        <taxon>Gammaproteobacteria</taxon>
        <taxon>Alteromonadales</taxon>
        <taxon>Alteromonadaceae</taxon>
        <taxon>Paraglaciecola</taxon>
    </lineage>
</organism>
<proteinExistence type="inferred from homology"/>